<feature type="chain" id="PRO_0000068105" description="Glucose-6-phosphate 1-dehydrogenase">
    <location>
        <begin position="1"/>
        <end position="495"/>
    </location>
</feature>
<feature type="active site" description="Proton acceptor" evidence="1">
    <location>
        <position position="241"/>
    </location>
</feature>
<feature type="binding site" evidence="2">
    <location>
        <begin position="15"/>
        <end position="22"/>
    </location>
    <ligand>
        <name>NADP(+)</name>
        <dbReference type="ChEBI" id="CHEBI:58349"/>
        <label>1</label>
    </ligand>
</feature>
<feature type="binding site" evidence="2">
    <location>
        <position position="49"/>
    </location>
    <ligand>
        <name>NADP(+)</name>
        <dbReference type="ChEBI" id="CHEBI:58349"/>
        <label>1</label>
    </ligand>
</feature>
<feature type="binding site" evidence="2">
    <location>
        <position position="149"/>
    </location>
    <ligand>
        <name>D-glucose 6-phosphate</name>
        <dbReference type="ChEBI" id="CHEBI:61548"/>
    </ligand>
</feature>
<feature type="binding site" evidence="2">
    <location>
        <position position="149"/>
    </location>
    <ligand>
        <name>NADP(+)</name>
        <dbReference type="ChEBI" id="CHEBI:58349"/>
        <label>1</label>
    </ligand>
</feature>
<feature type="binding site" evidence="2">
    <location>
        <begin position="179"/>
        <end position="183"/>
    </location>
    <ligand>
        <name>D-glucose 6-phosphate</name>
        <dbReference type="ChEBI" id="CHEBI:61548"/>
    </ligand>
</feature>
<feature type="binding site" evidence="2">
    <location>
        <position position="217"/>
    </location>
    <ligand>
        <name>D-glucose 6-phosphate</name>
        <dbReference type="ChEBI" id="CHEBI:61548"/>
    </ligand>
</feature>
<feature type="binding site" evidence="2">
    <location>
        <position position="236"/>
    </location>
    <ligand>
        <name>D-glucose 6-phosphate</name>
        <dbReference type="ChEBI" id="CHEBI:61548"/>
    </ligand>
</feature>
<feature type="binding site" evidence="2">
    <location>
        <position position="332"/>
    </location>
    <ligand>
        <name>NADP(+)</name>
        <dbReference type="ChEBI" id="CHEBI:58349"/>
        <label>2</label>
    </ligand>
</feature>
<feature type="binding site" evidence="2">
    <location>
        <position position="335"/>
    </location>
    <ligand>
        <name>D-glucose 6-phosphate</name>
        <dbReference type="ChEBI" id="CHEBI:61548"/>
    </ligand>
</feature>
<feature type="binding site" evidence="2">
    <location>
        <position position="341"/>
    </location>
    <ligand>
        <name>NADP(+)</name>
        <dbReference type="ChEBI" id="CHEBI:58349"/>
        <label>2</label>
    </ligand>
</feature>
<feature type="binding site" evidence="2">
    <location>
        <position position="345"/>
    </location>
    <ligand>
        <name>NADP(+)</name>
        <dbReference type="ChEBI" id="CHEBI:58349"/>
        <label>2</label>
    </ligand>
</feature>
<feature type="binding site" evidence="2">
    <location>
        <position position="367"/>
    </location>
    <ligand>
        <name>NADP(+)</name>
        <dbReference type="ChEBI" id="CHEBI:58349"/>
        <label>2</label>
    </ligand>
</feature>
<feature type="binding site" evidence="2">
    <location>
        <position position="369"/>
    </location>
    <ligand>
        <name>D-glucose 6-phosphate</name>
        <dbReference type="ChEBI" id="CHEBI:61548"/>
    </ligand>
</feature>
<feature type="binding site" evidence="2">
    <location>
        <begin position="375"/>
        <end position="377"/>
    </location>
    <ligand>
        <name>NADP(+)</name>
        <dbReference type="ChEBI" id="CHEBI:58349"/>
        <label>2</label>
    </ligand>
</feature>
<feature type="binding site" evidence="2">
    <location>
        <begin position="395"/>
        <end position="397"/>
    </location>
    <ligand>
        <name>NADP(+)</name>
        <dbReference type="ChEBI" id="CHEBI:58349"/>
        <label>2</label>
    </ligand>
</feature>
<feature type="binding site" evidence="2">
    <location>
        <position position="463"/>
    </location>
    <ligand>
        <name>NADP(+)</name>
        <dbReference type="ChEBI" id="CHEBI:58349"/>
        <label>2</label>
    </ligand>
</feature>
<feature type="modified residue" description="N-acetylserine" evidence="3">
    <location>
        <position position="1"/>
    </location>
</feature>
<feature type="sequence variant">
    <original>H</original>
    <variation>G</variation>
    <location>
        <position position="107"/>
    </location>
</feature>
<feature type="sequence variant">
    <original>P</original>
    <variation>M</variation>
    <location>
        <position position="138"/>
    </location>
</feature>
<feature type="sequence variant">
    <original>I</original>
    <variation>T</variation>
    <location>
        <position position="416"/>
    </location>
</feature>
<evidence type="ECO:0000250" key="1">
    <source>
        <dbReference type="UniProtKB" id="P11411"/>
    </source>
</evidence>
<evidence type="ECO:0000250" key="2">
    <source>
        <dbReference type="UniProtKB" id="P11413"/>
    </source>
</evidence>
<evidence type="ECO:0000269" key="3">
    <source>
    </source>
</evidence>
<evidence type="ECO:0000305" key="4"/>
<sequence>SYDSFGDRVTIIVFGASGDLARKKTFPALFGLFREKQLPSTVQIIGYARSHLSDKDFKDYISSHFKGGDDKTKEDFLNLCSYISDPYDTDEGYKKLEARCQEYESKHNVKVPERLFYLALPPSVFHTVCEQVKKNVYPKNEKSRIIIEKPFGRDLETYRELQKQISPLFTEDEVYRIDHYLGKEMVKNLLVLRFGNELFSGIWNNKHITSVQISFKEAFGTEGRGGYFDNIGIIRDVMQNHLLQVLTLLTMERPVSFDPEAVRDEKVKVLKAFDKIDVNDVLLGQYGKSEDGTKPGYLDDSTVKPNSKAVTYAAFRVNIHNERWDGVPIVLRAGKALDEGKAEIRIQFKPVAKGMFKEIQRNELVIRIQPNEAIYLKINSKIPGISTETSLTDLDLTYSTRYSKDFWIPEAYEALIRDCYLGNHSNFVRDDELEVSWKLFTPLLEAVEKEENVKLESYPYGSKGPKELRKYLIDHGYVFNDPGTYQWPLTNTDVK</sequence>
<name>G6PD_CYBJA</name>
<dbReference type="EC" id="1.1.1.49" evidence="2"/>
<dbReference type="PIR" id="S11078">
    <property type="entry name" value="S11078"/>
</dbReference>
<dbReference type="PIR" id="S29381">
    <property type="entry name" value="S29381"/>
</dbReference>
<dbReference type="SMR" id="P11410"/>
<dbReference type="iPTMnet" id="P11410"/>
<dbReference type="UniPathway" id="UPA00115">
    <property type="reaction ID" value="UER00408"/>
</dbReference>
<dbReference type="GO" id="GO:0005829">
    <property type="term" value="C:cytosol"/>
    <property type="evidence" value="ECO:0007669"/>
    <property type="project" value="TreeGrafter"/>
</dbReference>
<dbReference type="GO" id="GO:0004345">
    <property type="term" value="F:glucose-6-phosphate dehydrogenase activity"/>
    <property type="evidence" value="ECO:0007669"/>
    <property type="project" value="UniProtKB-EC"/>
</dbReference>
<dbReference type="GO" id="GO:0050661">
    <property type="term" value="F:NADP binding"/>
    <property type="evidence" value="ECO:0007669"/>
    <property type="project" value="InterPro"/>
</dbReference>
<dbReference type="GO" id="GO:0006006">
    <property type="term" value="P:glucose metabolic process"/>
    <property type="evidence" value="ECO:0007669"/>
    <property type="project" value="UniProtKB-KW"/>
</dbReference>
<dbReference type="GO" id="GO:0009051">
    <property type="term" value="P:pentose-phosphate shunt, oxidative branch"/>
    <property type="evidence" value="ECO:0007669"/>
    <property type="project" value="TreeGrafter"/>
</dbReference>
<dbReference type="FunFam" id="3.30.360.10:FF:000015">
    <property type="entry name" value="Glucose-6-phosphate 1-dehydrogenase"/>
    <property type="match status" value="1"/>
</dbReference>
<dbReference type="FunFam" id="3.40.50.720:FF:000111">
    <property type="entry name" value="Glucose-6-phosphate 1-dehydrogenase"/>
    <property type="match status" value="1"/>
</dbReference>
<dbReference type="Gene3D" id="3.30.360.10">
    <property type="entry name" value="Dihydrodipicolinate Reductase, domain 2"/>
    <property type="match status" value="1"/>
</dbReference>
<dbReference type="Gene3D" id="3.40.50.720">
    <property type="entry name" value="NAD(P)-binding Rossmann-like Domain"/>
    <property type="match status" value="1"/>
</dbReference>
<dbReference type="HAMAP" id="MF_00966">
    <property type="entry name" value="G6PD"/>
    <property type="match status" value="1"/>
</dbReference>
<dbReference type="InterPro" id="IPR001282">
    <property type="entry name" value="G6P_DH"/>
</dbReference>
<dbReference type="InterPro" id="IPR019796">
    <property type="entry name" value="G6P_DH_AS"/>
</dbReference>
<dbReference type="InterPro" id="IPR022675">
    <property type="entry name" value="G6P_DH_C"/>
</dbReference>
<dbReference type="InterPro" id="IPR022674">
    <property type="entry name" value="G6P_DH_NAD-bd"/>
</dbReference>
<dbReference type="InterPro" id="IPR036291">
    <property type="entry name" value="NAD(P)-bd_dom_sf"/>
</dbReference>
<dbReference type="NCBIfam" id="TIGR00871">
    <property type="entry name" value="zwf"/>
    <property type="match status" value="1"/>
</dbReference>
<dbReference type="PANTHER" id="PTHR23429:SF0">
    <property type="entry name" value="GLUCOSE-6-PHOSPHATE 1-DEHYDROGENASE"/>
    <property type="match status" value="1"/>
</dbReference>
<dbReference type="PANTHER" id="PTHR23429">
    <property type="entry name" value="GLUCOSE-6-PHOSPHATE 1-DEHYDROGENASE G6PD"/>
    <property type="match status" value="1"/>
</dbReference>
<dbReference type="Pfam" id="PF02781">
    <property type="entry name" value="G6PD_C"/>
    <property type="match status" value="1"/>
</dbReference>
<dbReference type="Pfam" id="PF00479">
    <property type="entry name" value="G6PD_N"/>
    <property type="match status" value="1"/>
</dbReference>
<dbReference type="PIRSF" id="PIRSF000110">
    <property type="entry name" value="G6PD"/>
    <property type="match status" value="1"/>
</dbReference>
<dbReference type="PRINTS" id="PR00079">
    <property type="entry name" value="G6PDHDRGNASE"/>
</dbReference>
<dbReference type="SUPFAM" id="SSF55347">
    <property type="entry name" value="Glyceraldehyde-3-phosphate dehydrogenase-like, C-terminal domain"/>
    <property type="match status" value="1"/>
</dbReference>
<dbReference type="SUPFAM" id="SSF51735">
    <property type="entry name" value="NAD(P)-binding Rossmann-fold domains"/>
    <property type="match status" value="1"/>
</dbReference>
<dbReference type="PROSITE" id="PS00069">
    <property type="entry name" value="G6P_DEHYDROGENASE"/>
    <property type="match status" value="1"/>
</dbReference>
<reference key="1">
    <citation type="journal article" date="1993" name="Eur. J. Biochem.">
        <title>Glucose-6-phosphate dehydrogenase. Structure-function relationships and the Pichia jadinii enzyme structure.</title>
        <authorList>
            <person name="Jeffery J."/>
            <person name="Persson B."/>
            <person name="Wood I."/>
            <person name="Bergman T."/>
            <person name="Jeffery R."/>
            <person name="Joernvall H."/>
        </authorList>
    </citation>
    <scope>PROTEIN SEQUENCE</scope>
</reference>
<reference key="2">
    <citation type="journal article" date="1989" name="Biochem. Biophys. Res. Commun.">
        <title>Glucose-6-phosphate dehydrogenase. Characterization of a reactive lysine residue in the Pichia jadinii enzyme reveals a limited structural variation in a functionally significant segment.</title>
        <authorList>
            <person name="Jeffery J."/>
            <person name="Wood I."/>
            <person name="McLeod A."/>
            <person name="Jeffery R."/>
            <person name="Joernvall H."/>
        </authorList>
    </citation>
    <scope>PROTEIN SEQUENCE OF 177-187</scope>
    <source>
        <strain>ATCC 9950 / CBS 5609 / DSM 2361 / NBRC 0998 / NRRL Y-900</strain>
    </source>
</reference>
<reference key="3">
    <citation type="journal article" date="1996" name="FEBS Lett.">
        <title>Alcoholytic deblocking of N-terminally acetylated peptides and proteins for sequence analysis.</title>
        <authorList>
            <person name="Bergman T."/>
            <person name="Gheorghe M.T."/>
            <person name="Hjelmqvist L."/>
            <person name="Joernvall H."/>
        </authorList>
    </citation>
    <scope>PROTEIN SEQUENCE OF 1-10</scope>
    <scope>ACETYLATION AT SER-1</scope>
</reference>
<comment type="function">
    <text evidence="2">Catalyzes the rate-limiting step of the oxidative pentose-phosphate pathway, which represents a route for the dissimilation of carbohydrates besides glycolysis. The main function of this enzyme is to provide reducing power (NADPH) and pentose phosphates for fatty acid and nucleic acid synthesis (By similarity).</text>
</comment>
<comment type="catalytic activity">
    <reaction evidence="2">
        <text>D-glucose 6-phosphate + NADP(+) = 6-phospho-D-glucono-1,5-lactone + NADPH + H(+)</text>
        <dbReference type="Rhea" id="RHEA:15841"/>
        <dbReference type="ChEBI" id="CHEBI:15378"/>
        <dbReference type="ChEBI" id="CHEBI:57783"/>
        <dbReference type="ChEBI" id="CHEBI:57955"/>
        <dbReference type="ChEBI" id="CHEBI:58349"/>
        <dbReference type="ChEBI" id="CHEBI:61548"/>
        <dbReference type="EC" id="1.1.1.49"/>
    </reaction>
</comment>
<comment type="pathway">
    <text evidence="2">Carbohydrate degradation; pentose phosphate pathway; D-ribulose 5-phosphate from D-glucose 6-phosphate (oxidative stage): step 1/3.</text>
</comment>
<comment type="similarity">
    <text evidence="4">Belongs to the glucose-6-phosphate dehydrogenase family.</text>
</comment>
<protein>
    <recommendedName>
        <fullName>Glucose-6-phosphate 1-dehydrogenase</fullName>
        <shortName>G6PD</shortName>
        <ecNumber evidence="2">1.1.1.49</ecNumber>
    </recommendedName>
</protein>
<proteinExistence type="evidence at protein level"/>
<keyword id="KW-0007">Acetylation</keyword>
<keyword id="KW-0119">Carbohydrate metabolism</keyword>
<keyword id="KW-0903">Direct protein sequencing</keyword>
<keyword id="KW-0313">Glucose metabolism</keyword>
<keyword id="KW-0521">NADP</keyword>
<keyword id="KW-0560">Oxidoreductase</keyword>
<organism>
    <name type="scientific">Cyberlindnera jadinii</name>
    <name type="common">Torula yeast</name>
    <name type="synonym">Pichia jadinii</name>
    <dbReference type="NCBI Taxonomy" id="4903"/>
    <lineage>
        <taxon>Eukaryota</taxon>
        <taxon>Fungi</taxon>
        <taxon>Dikarya</taxon>
        <taxon>Ascomycota</taxon>
        <taxon>Saccharomycotina</taxon>
        <taxon>Saccharomycetes</taxon>
        <taxon>Phaffomycetales</taxon>
        <taxon>Phaffomycetaceae</taxon>
        <taxon>Cyberlindnera</taxon>
    </lineage>
</organism>
<accession>P11410</accession>